<gene>
    <name type="primary">pst-2</name>
    <name type="ORF">CBG08992</name>
</gene>
<sequence length="363" mass="40552">MTVAQIHSDCSSSMLPRHIKDDVEPIHLLGFNIARKPKWLQFVLLSGAIFILYLGYGYMQELIFKLPGMKPFGWTLTLIQFVIYSGCGYAECAVWHNTKRMIPWRIYGVIAFFTVATMGLSNASVGYLNYPTQVIFKCCKLIPVLIGGILIQGKRYGWIDISAAILMSLGIIMFTLADNKVSPNFDSRGYIMISGALLADAVIGNIQEKNMKKYGGSSNEVVLYSYGIGSVFIFTYVVLSGEIFSAIPFFLENSWKTFGYALIFSFLGYLGVNVVLTHIKVFGALVAVTVTTLRKALTIILSFLLFSKPFTIEYVYAGSVVMLAIYLNLYSKNKASWDHMIRIFVARAMGYHAVATKKDPMMV</sequence>
<organism>
    <name type="scientific">Caenorhabditis briggsae</name>
    <dbReference type="NCBI Taxonomy" id="6238"/>
    <lineage>
        <taxon>Eukaryota</taxon>
        <taxon>Metazoa</taxon>
        <taxon>Ecdysozoa</taxon>
        <taxon>Nematoda</taxon>
        <taxon>Chromadorea</taxon>
        <taxon>Rhabditida</taxon>
        <taxon>Rhabditina</taxon>
        <taxon>Rhabditomorpha</taxon>
        <taxon>Rhabditoidea</taxon>
        <taxon>Rhabditidae</taxon>
        <taxon>Peloderinae</taxon>
        <taxon>Caenorhabditis</taxon>
    </lineage>
</organism>
<feature type="chain" id="PRO_0000213382" description="Adenosine 3'-phospho 5'-phosphosulfate transporter 2">
    <location>
        <begin position="1"/>
        <end position="363"/>
    </location>
</feature>
<feature type="transmembrane region" description="Helical" evidence="2">
    <location>
        <begin position="39"/>
        <end position="59"/>
    </location>
</feature>
<feature type="transmembrane region" description="Helical" evidence="2">
    <location>
        <begin position="63"/>
        <end position="83"/>
    </location>
</feature>
<feature type="transmembrane region" description="Helical" evidence="2">
    <location>
        <begin position="106"/>
        <end position="126"/>
    </location>
</feature>
<feature type="transmembrane region" description="Helical" evidence="2">
    <location>
        <begin position="131"/>
        <end position="151"/>
    </location>
</feature>
<feature type="transmembrane region" description="Helical" evidence="2">
    <location>
        <begin position="157"/>
        <end position="177"/>
    </location>
</feature>
<feature type="transmembrane region" description="Helical" evidence="2">
    <location>
        <begin position="187"/>
        <end position="206"/>
    </location>
</feature>
<feature type="transmembrane region" description="Helical" evidence="2">
    <location>
        <begin position="231"/>
        <end position="251"/>
    </location>
</feature>
<feature type="transmembrane region" description="Helical" evidence="2">
    <location>
        <begin position="257"/>
        <end position="277"/>
    </location>
</feature>
<feature type="transmembrane region" description="Helical" evidence="2">
    <location>
        <begin position="281"/>
        <end position="301"/>
    </location>
</feature>
<feature type="transmembrane region" description="Helical" evidence="2">
    <location>
        <begin position="310"/>
        <end position="330"/>
    </location>
</feature>
<keyword id="KW-0333">Golgi apparatus</keyword>
<keyword id="KW-0472">Membrane</keyword>
<keyword id="KW-1185">Reference proteome</keyword>
<keyword id="KW-0812">Transmembrane</keyword>
<keyword id="KW-1133">Transmembrane helix</keyword>
<keyword id="KW-0813">Transport</keyword>
<proteinExistence type="inferred from homology"/>
<dbReference type="EMBL" id="HE601284">
    <property type="protein sequence ID" value="CAP28785.3"/>
    <property type="molecule type" value="Genomic_DNA"/>
</dbReference>
<dbReference type="SMR" id="Q61LC0"/>
<dbReference type="FunCoup" id="Q61LC0">
    <property type="interactions" value="2036"/>
</dbReference>
<dbReference type="EnsemblMetazoa" id="CBG08992.1">
    <property type="protein sequence ID" value="CBG08992.1"/>
    <property type="gene ID" value="WBGene00030668"/>
</dbReference>
<dbReference type="KEGG" id="cbr:CBG_08992"/>
<dbReference type="CTD" id="8583133"/>
<dbReference type="WormBase" id="CBG08992">
    <property type="protein sequence ID" value="CBP08146"/>
    <property type="gene ID" value="WBGene00030668"/>
    <property type="gene designation" value="Cbr-pst-2"/>
</dbReference>
<dbReference type="eggNOG" id="KOG1582">
    <property type="taxonomic scope" value="Eukaryota"/>
</dbReference>
<dbReference type="HOGENOM" id="CLU_036019_2_0_1"/>
<dbReference type="InParanoid" id="Q61LC0"/>
<dbReference type="OMA" id="YNRTTQF"/>
<dbReference type="Proteomes" id="UP000008549">
    <property type="component" value="Unassembled WGS sequence"/>
</dbReference>
<dbReference type="GO" id="GO:0005789">
    <property type="term" value="C:endoplasmic reticulum membrane"/>
    <property type="evidence" value="ECO:0000318"/>
    <property type="project" value="GO_Central"/>
</dbReference>
<dbReference type="GO" id="GO:1990674">
    <property type="term" value="C:Golgi cis cisterna membrane"/>
    <property type="evidence" value="ECO:0007669"/>
    <property type="project" value="EnsemblMetazoa"/>
</dbReference>
<dbReference type="GO" id="GO:1990675">
    <property type="term" value="C:Golgi medial cisterna membrane"/>
    <property type="evidence" value="ECO:0007669"/>
    <property type="project" value="EnsemblMetazoa"/>
</dbReference>
<dbReference type="GO" id="GO:0000139">
    <property type="term" value="C:Golgi membrane"/>
    <property type="evidence" value="ECO:0000318"/>
    <property type="project" value="GO_Central"/>
</dbReference>
<dbReference type="GO" id="GO:0046964">
    <property type="term" value="F:3'-phosphoadenosine 5'-phosphosulfate transmembrane transporter activity"/>
    <property type="evidence" value="ECO:0000318"/>
    <property type="project" value="GO_Central"/>
</dbReference>
<dbReference type="GO" id="GO:0046963">
    <property type="term" value="P:3'-phosphoadenosine 5'-phosphosulfate transport"/>
    <property type="evidence" value="ECO:0000318"/>
    <property type="project" value="GO_Central"/>
</dbReference>
<dbReference type="GO" id="GO:0055085">
    <property type="term" value="P:transmembrane transport"/>
    <property type="evidence" value="ECO:0000318"/>
    <property type="project" value="GO_Central"/>
</dbReference>
<dbReference type="InterPro" id="IPR013657">
    <property type="entry name" value="SCL35B1-4/HUT1"/>
</dbReference>
<dbReference type="PANTHER" id="PTHR10778:SF8">
    <property type="entry name" value="ADENOSINE 3'-PHOSPHO 5'-PHOSPHOSULFATE TRANSPORTER 2"/>
    <property type="match status" value="1"/>
</dbReference>
<dbReference type="PANTHER" id="PTHR10778">
    <property type="entry name" value="SOLUTE CARRIER FAMILY 35 MEMBER B"/>
    <property type="match status" value="1"/>
</dbReference>
<dbReference type="Pfam" id="PF08449">
    <property type="entry name" value="UAA"/>
    <property type="match status" value="1"/>
</dbReference>
<accession>Q61LC0</accession>
<accession>A8X824</accession>
<protein>
    <recommendedName>
        <fullName>Adenosine 3'-phospho 5'-phosphosulfate transporter 2</fullName>
    </recommendedName>
    <alternativeName>
        <fullName>Adenosine 3'-phosphate 5'-phosphosulfate transporter</fullName>
    </alternativeName>
    <alternativeName>
        <fullName>PAPS transporter 2</fullName>
    </alternativeName>
    <alternativeName>
        <fullName>Solute carrier family 35 member B3 homolog</fullName>
    </alternativeName>
</protein>
<name>S35B3_CAEBR</name>
<comment type="function">
    <text evidence="1">Mediates the transport of adenosine 3'-phospho 5'-phosphosulfate (PAPS), from cytosol into Golgi. PAPS is a universal sulfuryl donor for sulfation events that take place in the Golgi (By similarity).</text>
</comment>
<comment type="subcellular location">
    <subcellularLocation>
        <location evidence="1">Golgi apparatus membrane</location>
        <topology evidence="1">Multi-pass membrane protein</topology>
    </subcellularLocation>
</comment>
<comment type="similarity">
    <text evidence="3">Belongs to the nucleotide-sugar transporter family. SLC35B subfamily.</text>
</comment>
<reference key="1">
    <citation type="journal article" date="2003" name="PLoS Biol.">
        <title>The genome sequence of Caenorhabditis briggsae: a platform for comparative genomics.</title>
        <authorList>
            <person name="Stein L.D."/>
            <person name="Bao Z."/>
            <person name="Blasiar D."/>
            <person name="Blumenthal T."/>
            <person name="Brent M.R."/>
            <person name="Chen N."/>
            <person name="Chinwalla A."/>
            <person name="Clarke L."/>
            <person name="Clee C."/>
            <person name="Coghlan A."/>
            <person name="Coulson A."/>
            <person name="D'Eustachio P."/>
            <person name="Fitch D.H.A."/>
            <person name="Fulton L.A."/>
            <person name="Fulton R.E."/>
            <person name="Griffiths-Jones S."/>
            <person name="Harris T.W."/>
            <person name="Hillier L.W."/>
            <person name="Kamath R."/>
            <person name="Kuwabara P.E."/>
            <person name="Mardis E.R."/>
            <person name="Marra M.A."/>
            <person name="Miner T.L."/>
            <person name="Minx P."/>
            <person name="Mullikin J.C."/>
            <person name="Plumb R.W."/>
            <person name="Rogers J."/>
            <person name="Schein J.E."/>
            <person name="Sohrmann M."/>
            <person name="Spieth J."/>
            <person name="Stajich J.E."/>
            <person name="Wei C."/>
            <person name="Willey D."/>
            <person name="Wilson R.K."/>
            <person name="Durbin R.M."/>
            <person name="Waterston R.H."/>
        </authorList>
    </citation>
    <scope>NUCLEOTIDE SEQUENCE [LARGE SCALE GENOMIC DNA]</scope>
    <source>
        <strain>AF16</strain>
    </source>
</reference>
<evidence type="ECO:0000250" key="1"/>
<evidence type="ECO:0000255" key="2"/>
<evidence type="ECO:0000305" key="3"/>